<feature type="chain" id="PRO_1000030499" description="D-alanine--D-alanine ligase">
    <location>
        <begin position="1"/>
        <end position="347"/>
    </location>
</feature>
<feature type="domain" description="ATP-grasp" evidence="2">
    <location>
        <begin position="131"/>
        <end position="333"/>
    </location>
</feature>
<feature type="binding site" evidence="2">
    <location>
        <begin position="161"/>
        <end position="216"/>
    </location>
    <ligand>
        <name>ATP</name>
        <dbReference type="ChEBI" id="CHEBI:30616"/>
    </ligand>
</feature>
<feature type="binding site" evidence="2">
    <location>
        <position position="287"/>
    </location>
    <ligand>
        <name>Mg(2+)</name>
        <dbReference type="ChEBI" id="CHEBI:18420"/>
        <label>1</label>
    </ligand>
</feature>
<feature type="binding site" evidence="2">
    <location>
        <position position="300"/>
    </location>
    <ligand>
        <name>Mg(2+)</name>
        <dbReference type="ChEBI" id="CHEBI:18420"/>
        <label>1</label>
    </ligand>
</feature>
<feature type="binding site" evidence="2">
    <location>
        <position position="300"/>
    </location>
    <ligand>
        <name>Mg(2+)</name>
        <dbReference type="ChEBI" id="CHEBI:18420"/>
        <label>2</label>
    </ligand>
</feature>
<feature type="binding site" evidence="2">
    <location>
        <position position="302"/>
    </location>
    <ligand>
        <name>Mg(2+)</name>
        <dbReference type="ChEBI" id="CHEBI:18420"/>
        <label>2</label>
    </ligand>
</feature>
<proteinExistence type="inferred from homology"/>
<evidence type="ECO:0000250" key="1"/>
<evidence type="ECO:0000255" key="2">
    <source>
        <dbReference type="HAMAP-Rule" id="MF_00047"/>
    </source>
</evidence>
<comment type="function">
    <text evidence="2">Cell wall formation.</text>
</comment>
<comment type="catalytic activity">
    <reaction evidence="2">
        <text>2 D-alanine + ATP = D-alanyl-D-alanine + ADP + phosphate + H(+)</text>
        <dbReference type="Rhea" id="RHEA:11224"/>
        <dbReference type="ChEBI" id="CHEBI:15378"/>
        <dbReference type="ChEBI" id="CHEBI:30616"/>
        <dbReference type="ChEBI" id="CHEBI:43474"/>
        <dbReference type="ChEBI" id="CHEBI:57416"/>
        <dbReference type="ChEBI" id="CHEBI:57822"/>
        <dbReference type="ChEBI" id="CHEBI:456216"/>
        <dbReference type="EC" id="6.3.2.4"/>
    </reaction>
</comment>
<comment type="cofactor">
    <cofactor evidence="1">
        <name>Mg(2+)</name>
        <dbReference type="ChEBI" id="CHEBI:18420"/>
    </cofactor>
    <cofactor evidence="1">
        <name>Mn(2+)</name>
        <dbReference type="ChEBI" id="CHEBI:29035"/>
    </cofactor>
    <text evidence="1">Binds 2 magnesium or manganese ions per subunit.</text>
</comment>
<comment type="pathway">
    <text evidence="2">Cell wall biogenesis; peptidoglycan biosynthesis.</text>
</comment>
<comment type="subcellular location">
    <subcellularLocation>
        <location evidence="2">Cytoplasm</location>
    </subcellularLocation>
</comment>
<comment type="similarity">
    <text evidence="2">Belongs to the D-alanine--D-alanine ligase family.</text>
</comment>
<gene>
    <name evidence="2" type="primary">ddl</name>
    <name type="ordered locus">SPD_1484</name>
</gene>
<protein>
    <recommendedName>
        <fullName evidence="2">D-alanine--D-alanine ligase</fullName>
        <ecNumber evidence="2">6.3.2.4</ecNumber>
    </recommendedName>
    <alternativeName>
        <fullName evidence="2">D-Ala-D-Ala ligase</fullName>
    </alternativeName>
    <alternativeName>
        <fullName evidence="2">D-alanylalanine synthetase</fullName>
    </alternativeName>
</protein>
<name>DDL_STRP2</name>
<reference key="1">
    <citation type="journal article" date="2007" name="J. Bacteriol.">
        <title>Genome sequence of Avery's virulent serotype 2 strain D39 of Streptococcus pneumoniae and comparison with that of unencapsulated laboratory strain R6.</title>
        <authorList>
            <person name="Lanie J.A."/>
            <person name="Ng W.-L."/>
            <person name="Kazmierczak K.M."/>
            <person name="Andrzejewski T.M."/>
            <person name="Davidsen T.M."/>
            <person name="Wayne K.J."/>
            <person name="Tettelin H."/>
            <person name="Glass J.I."/>
            <person name="Winkler M.E."/>
        </authorList>
    </citation>
    <scope>NUCLEOTIDE SEQUENCE [LARGE SCALE GENOMIC DNA]</scope>
    <source>
        <strain>D39 / NCTC 7466</strain>
    </source>
</reference>
<sequence>MKQTIILLYGGRSAEREVSVLSAESVMRAVDYDRFTVKTFFISQSGDFIKTQEFSHAPGQEDRLMTNETIDWDKKVAPSAIYEEGAVVFPVLHGPMGEDGSVQGFLEVLKMPYVGCNILSSSLAMDKITTKRVLESAGIAQVPYVAIVEGDDVTAKIAEVEEKLAYPVFTKPSNMGSSVGISKSENQEELRQALKLAFRYDSRVLVEQGVNAREIEVGLLGNYDVKSTLPGEVVKDVAFYDYDAKYIDNKVTMDIPAKISDDVVAVMRQNAETAFRAIGGLGLSRCDFFYTDKGEIFLNELNTMPGFTQWSMYPLLWENMGISYPELIERLVDLAKESFDKREAHLI</sequence>
<organism>
    <name type="scientific">Streptococcus pneumoniae serotype 2 (strain D39 / NCTC 7466)</name>
    <dbReference type="NCBI Taxonomy" id="373153"/>
    <lineage>
        <taxon>Bacteria</taxon>
        <taxon>Bacillati</taxon>
        <taxon>Bacillota</taxon>
        <taxon>Bacilli</taxon>
        <taxon>Lactobacillales</taxon>
        <taxon>Streptococcaceae</taxon>
        <taxon>Streptococcus</taxon>
    </lineage>
</organism>
<keyword id="KW-0067">ATP-binding</keyword>
<keyword id="KW-0133">Cell shape</keyword>
<keyword id="KW-0961">Cell wall biogenesis/degradation</keyword>
<keyword id="KW-0963">Cytoplasm</keyword>
<keyword id="KW-0436">Ligase</keyword>
<keyword id="KW-0460">Magnesium</keyword>
<keyword id="KW-0464">Manganese</keyword>
<keyword id="KW-0479">Metal-binding</keyword>
<keyword id="KW-0547">Nucleotide-binding</keyword>
<keyword id="KW-0573">Peptidoglycan synthesis</keyword>
<keyword id="KW-1185">Reference proteome</keyword>
<dbReference type="EC" id="6.3.2.4" evidence="2"/>
<dbReference type="EMBL" id="CP000410">
    <property type="protein sequence ID" value="ABJ55128.1"/>
    <property type="molecule type" value="Genomic_DNA"/>
</dbReference>
<dbReference type="RefSeq" id="WP_000814630.1">
    <property type="nucleotide sequence ID" value="NZ_JAMLJR010000013.1"/>
</dbReference>
<dbReference type="SMR" id="Q04J98"/>
<dbReference type="PaxDb" id="373153-SPD_1484"/>
<dbReference type="KEGG" id="spd:SPD_1484"/>
<dbReference type="eggNOG" id="COG1181">
    <property type="taxonomic scope" value="Bacteria"/>
</dbReference>
<dbReference type="HOGENOM" id="CLU_039268_0_0_9"/>
<dbReference type="BioCyc" id="SPNE373153:G1G6V-1600-MONOMER"/>
<dbReference type="UniPathway" id="UPA00219"/>
<dbReference type="Proteomes" id="UP000001452">
    <property type="component" value="Chromosome"/>
</dbReference>
<dbReference type="GO" id="GO:0005829">
    <property type="term" value="C:cytosol"/>
    <property type="evidence" value="ECO:0007669"/>
    <property type="project" value="TreeGrafter"/>
</dbReference>
<dbReference type="GO" id="GO:0005524">
    <property type="term" value="F:ATP binding"/>
    <property type="evidence" value="ECO:0007669"/>
    <property type="project" value="UniProtKB-KW"/>
</dbReference>
<dbReference type="GO" id="GO:0008716">
    <property type="term" value="F:D-alanine-D-alanine ligase activity"/>
    <property type="evidence" value="ECO:0007669"/>
    <property type="project" value="UniProtKB-UniRule"/>
</dbReference>
<dbReference type="GO" id="GO:0046872">
    <property type="term" value="F:metal ion binding"/>
    <property type="evidence" value="ECO:0007669"/>
    <property type="project" value="UniProtKB-KW"/>
</dbReference>
<dbReference type="GO" id="GO:0071555">
    <property type="term" value="P:cell wall organization"/>
    <property type="evidence" value="ECO:0007669"/>
    <property type="project" value="UniProtKB-KW"/>
</dbReference>
<dbReference type="GO" id="GO:0009252">
    <property type="term" value="P:peptidoglycan biosynthetic process"/>
    <property type="evidence" value="ECO:0007669"/>
    <property type="project" value="UniProtKB-UniRule"/>
</dbReference>
<dbReference type="GO" id="GO:0008360">
    <property type="term" value="P:regulation of cell shape"/>
    <property type="evidence" value="ECO:0007669"/>
    <property type="project" value="UniProtKB-KW"/>
</dbReference>
<dbReference type="FunFam" id="3.30.1490.20:FF:000007">
    <property type="entry name" value="D-alanine--D-alanine ligase"/>
    <property type="match status" value="1"/>
</dbReference>
<dbReference type="FunFam" id="3.30.470.20:FF:000008">
    <property type="entry name" value="D-alanine--D-alanine ligase"/>
    <property type="match status" value="1"/>
</dbReference>
<dbReference type="FunFam" id="3.40.50.20:FF:000029">
    <property type="entry name" value="D-alanine--D-alanine ligase"/>
    <property type="match status" value="1"/>
</dbReference>
<dbReference type="Gene3D" id="3.40.50.20">
    <property type="match status" value="1"/>
</dbReference>
<dbReference type="Gene3D" id="3.30.1490.20">
    <property type="entry name" value="ATP-grasp fold, A domain"/>
    <property type="match status" value="1"/>
</dbReference>
<dbReference type="Gene3D" id="3.30.470.20">
    <property type="entry name" value="ATP-grasp fold, B domain"/>
    <property type="match status" value="1"/>
</dbReference>
<dbReference type="HAMAP" id="MF_00047">
    <property type="entry name" value="Dala_Dala_lig"/>
    <property type="match status" value="1"/>
</dbReference>
<dbReference type="InterPro" id="IPR011761">
    <property type="entry name" value="ATP-grasp"/>
</dbReference>
<dbReference type="InterPro" id="IPR013815">
    <property type="entry name" value="ATP_grasp_subdomain_1"/>
</dbReference>
<dbReference type="InterPro" id="IPR000291">
    <property type="entry name" value="D-Ala_lig_Van_CS"/>
</dbReference>
<dbReference type="InterPro" id="IPR005905">
    <property type="entry name" value="D_ala_D_ala"/>
</dbReference>
<dbReference type="InterPro" id="IPR011095">
    <property type="entry name" value="Dala_Dala_lig_C"/>
</dbReference>
<dbReference type="InterPro" id="IPR011127">
    <property type="entry name" value="Dala_Dala_lig_N"/>
</dbReference>
<dbReference type="InterPro" id="IPR016185">
    <property type="entry name" value="PreATP-grasp_dom_sf"/>
</dbReference>
<dbReference type="NCBIfam" id="TIGR01205">
    <property type="entry name" value="D_ala_D_alaTIGR"/>
    <property type="match status" value="1"/>
</dbReference>
<dbReference type="NCBIfam" id="NF002528">
    <property type="entry name" value="PRK01966.1-4"/>
    <property type="match status" value="1"/>
</dbReference>
<dbReference type="NCBIfam" id="NF002529">
    <property type="entry name" value="PRK01966.1-5"/>
    <property type="match status" value="1"/>
</dbReference>
<dbReference type="PANTHER" id="PTHR23132">
    <property type="entry name" value="D-ALANINE--D-ALANINE LIGASE"/>
    <property type="match status" value="1"/>
</dbReference>
<dbReference type="PANTHER" id="PTHR23132:SF25">
    <property type="entry name" value="D-ALANINE--D-ALANINE LIGASE A"/>
    <property type="match status" value="1"/>
</dbReference>
<dbReference type="Pfam" id="PF07478">
    <property type="entry name" value="Dala_Dala_lig_C"/>
    <property type="match status" value="1"/>
</dbReference>
<dbReference type="Pfam" id="PF01820">
    <property type="entry name" value="Dala_Dala_lig_N"/>
    <property type="match status" value="1"/>
</dbReference>
<dbReference type="PIRSF" id="PIRSF039102">
    <property type="entry name" value="Ddl/VanB"/>
    <property type="match status" value="1"/>
</dbReference>
<dbReference type="SUPFAM" id="SSF56059">
    <property type="entry name" value="Glutathione synthetase ATP-binding domain-like"/>
    <property type="match status" value="1"/>
</dbReference>
<dbReference type="SUPFAM" id="SSF52440">
    <property type="entry name" value="PreATP-grasp domain"/>
    <property type="match status" value="1"/>
</dbReference>
<dbReference type="PROSITE" id="PS50975">
    <property type="entry name" value="ATP_GRASP"/>
    <property type="match status" value="1"/>
</dbReference>
<dbReference type="PROSITE" id="PS00843">
    <property type="entry name" value="DALA_DALA_LIGASE_1"/>
    <property type="match status" value="1"/>
</dbReference>
<dbReference type="PROSITE" id="PS00844">
    <property type="entry name" value="DALA_DALA_LIGASE_2"/>
    <property type="match status" value="1"/>
</dbReference>
<accession>Q04J98</accession>